<sequence>MNLPGEIHHRFTYMYIAQVSFADLDITKHNLPISTMSSSDSPNYGDATMPIAIVGMAARFSGEATNPSKLWDMMVQGRTGHSAVPENRFDAEAWHHPSHERRGTIQPRSGFFLREDPAVFDAPFFSMTAKEAAGMDPMQRKLLEISYEAFENAGIPITKLPGTATGVYSGVMTNDYELMTAGDPMQLPQNAASGTSRAMLANRISWFYDLRGPSFALDTACSSSLYALHLACQSLQAGETDQALVTGVNLILAPNFISQLSSMHMLSPDGKSHSFDSRANGYARGEALAAVVVKPLYQALADGDTIRAVIRGSGANQDGKTVGITIPNPQAQAELIRKTYATAGLGLEQTGYFEAHGTGTPVGDPIELSAIGTSFGEHRSQNCPLFVGSVKTNVGHTEGAAGLAGVVKTVLALEAGIIPPLADFQELNEKLRLEEWKLALPLKATPWPMPGLRRASVNSFGFGGANAHVILDDAYHYLKSHGLSANHHTTLSESEDSSDSGLEMDSSTSDSGEGQSSKLLLFSAYDGAGIKRTEASWNSHLADILADSKTVDETMGMNDLAYTLSDRRTTFDFRSFAVASSVQDLKAKLENDGLPRLNRASRRSNPVFVFTGQGAQWPAMGRELLSNPIFRASIERSKAVLELEGCEWDVVQVLSDPQDQRIHIPAFSQPVCTILQVALVDLLQSWGIQPAATVGHSSGEVAAAYAAKMISQDEAVRIGYWRGFYSEQVKARLENIRGSMMAVGLSESQATSYLNRVPEGSVVVACINSPSSVTLSGEDHSIKTLEAILQADGHFARKLRVEVAYHSPHMKTVADEFLNAVGIITPQPSEIPMFSSVTETRVEDPATLVASYWMQNLISPVRFSGALATLLNDTPSVKANTRRRRTAGIVWSALIEVGPHEALKGPCRQIMSGLNTKLADQIPYMSVLSRGKSAVETSLTAAGLLWASGHPINIREVNQYRDTGERVITDLPPYPWNHEKGFWHEPAASISARLRKEPRNDLLGVPVAQQNPFERCWQNYLSVSECPWQKDHVITGTVLYPGAGHLIMAFEAAIRLAADNRPLKGVSFSDVHFDKGLVIPSDDHGVETRLCTRPHESLLDWYHYTLYSINATGDWTKHSWGSFSLHYEDAVSVQQAKRSKGEYDDINTRACRKLDVESFYEQLLSIGTEYGPTFRNLVHAAAAPGYHSGVGTITIPDTKSVMPHEFEYPHLIHPATLDAIFHLIFVAMGEGNALSESAIPTRVDRIYISTDLPRGVGAKYTGYGRAEPVSSRDTLGTIVVSDENWSAGPKIIVEGMTVTEVSAGASTSFNSLLIPGGQGRIATLEWKEDVDSLVGPTAESWLAQKGPSIGGQASDVTEAVQRLDAWLELSCFKSTDLGTLVICPSKLKGSFELVKKYGSKHGERYRFGRTTIIEFSENDISAAESAFAPHGIESSYAAIDLSATPEHAMEQLGMFDLIIAEENVIVQFPDVTKILHREGRVAIIRSHALPDERHFAATKGLLKEISFESQDGSILQIAGLGLEMDPAIRSLDDVVLLQHVDASPAAKNFEKRLTAQLTSLGAHVRSNTIANASSLSGNIVISLLEIDCQFVISWTSEEFEQFRQLTNARYVLWITRGGLLDADRASLDYAPSTGLLRTVRVEKPQIRLPHLDLSPSLDLNSDRAVEIVISAFHSSIKPSVKEKNLEMEYAESNGLLYIPRARGHAALDHELALRGEKVSSIPGPLSAPGIARRLETSLAGSPSQARWVPDETVGDKLADFDVEIQVSHVGLEHSKVENYLNGKQLSLAPGLGRVAVGTLTRAGAKVSRFIPGDQVFALHAAPFHTHLRVTEDAVHAVPDILSPAQAAHLPLAAARAWHSLIDVAAFRAGQSVFVNGASDTVGRLTVELARLLKGDVFASVSSDDEKHTLTKTYNIPEDHIFSLSHRTDWASDLKAAMGQGQLDIVINNATPSPAIRSLFQSIAPKGRFVDLTQRLDPSLLDPRMFQRNVTLSLVDWESLTNPQLGALMVRSLDLLRAGALTPIKEEYIFSVSDLPEALLSVGQQQHERVAAPVVVEFSADATVPLLPSLPAPLHLKPDATYILAGGLGALGLTIAENMCSHGAGHLVFLSRSGASSQRQQEALESFRARGCKVDVVKCDVTDQEQVQALATQIREQSWNVRGIIQLAMVLRDSIFENMTFDKWETAVNPKIKGTWNLHAELPKDVDFFIILSSLSGIIGNTAQANYCAGNTYEDALAHYRRKQGLAATTLNVGLVTDASHFNENSTIEDYLRKYSHWIAAQVTDSELQHTITAVMRRTVGDKNEPVPDQLLVGLSDNVRRDGNSLNLWPQDRKFDHRISLEDGLGVVEKDTNQQKLKASTTVAQAHEVVETALRLNVAAAMTASPDDIDIEKPLYAFGIDSLKGIEVRNWIFSELQADVSVFEVLSPMTLSRLALKIVSKSTLVGAELAAEAAADSVA</sequence>
<reference key="1">
    <citation type="journal article" date="2005" name="Nature">
        <title>Sequencing of Aspergillus nidulans and comparative analysis with A. fumigatus and A. oryzae.</title>
        <authorList>
            <person name="Galagan J.E."/>
            <person name="Calvo S.E."/>
            <person name="Cuomo C."/>
            <person name="Ma L.-J."/>
            <person name="Wortman J.R."/>
            <person name="Batzoglou S."/>
            <person name="Lee S.-I."/>
            <person name="Bastuerkmen M."/>
            <person name="Spevak C.C."/>
            <person name="Clutterbuck J."/>
            <person name="Kapitonov V."/>
            <person name="Jurka J."/>
            <person name="Scazzocchio C."/>
            <person name="Farman M.L."/>
            <person name="Butler J."/>
            <person name="Purcell S."/>
            <person name="Harris S."/>
            <person name="Braus G.H."/>
            <person name="Draht O."/>
            <person name="Busch S."/>
            <person name="D'Enfert C."/>
            <person name="Bouchier C."/>
            <person name="Goldman G.H."/>
            <person name="Bell-Pedersen D."/>
            <person name="Griffiths-Jones S."/>
            <person name="Doonan J.H."/>
            <person name="Yu J."/>
            <person name="Vienken K."/>
            <person name="Pain A."/>
            <person name="Freitag M."/>
            <person name="Selker E.U."/>
            <person name="Archer D.B."/>
            <person name="Penalva M.A."/>
            <person name="Oakley B.R."/>
            <person name="Momany M."/>
            <person name="Tanaka T."/>
            <person name="Kumagai T."/>
            <person name="Asai K."/>
            <person name="Machida M."/>
            <person name="Nierman W.C."/>
            <person name="Denning D.W."/>
            <person name="Caddick M.X."/>
            <person name="Hynes M."/>
            <person name="Paoletti M."/>
            <person name="Fischer R."/>
            <person name="Miller B.L."/>
            <person name="Dyer P.S."/>
            <person name="Sachs M.S."/>
            <person name="Osmani S.A."/>
            <person name="Birren B.W."/>
        </authorList>
    </citation>
    <scope>NUCLEOTIDE SEQUENCE [LARGE SCALE GENOMIC DNA]</scope>
    <source>
        <strain>FGSC A4 / ATCC 38163 / CBS 112.46 / NRRL 194 / M139</strain>
    </source>
</reference>
<reference key="2">
    <citation type="journal article" date="2009" name="Fungal Genet. Biol.">
        <title>The 2008 update of the Aspergillus nidulans genome annotation: a community effort.</title>
        <authorList>
            <person name="Wortman J.R."/>
            <person name="Gilsenan J.M."/>
            <person name="Joardar V."/>
            <person name="Deegan J."/>
            <person name="Clutterbuck J."/>
            <person name="Andersen M.R."/>
            <person name="Archer D."/>
            <person name="Bencina M."/>
            <person name="Braus G."/>
            <person name="Coutinho P."/>
            <person name="von Dohren H."/>
            <person name="Doonan J."/>
            <person name="Driessen A.J."/>
            <person name="Durek P."/>
            <person name="Espeso E."/>
            <person name="Fekete E."/>
            <person name="Flipphi M."/>
            <person name="Estrada C.G."/>
            <person name="Geysens S."/>
            <person name="Goldman G."/>
            <person name="de Groot P.W."/>
            <person name="Hansen K."/>
            <person name="Harris S.D."/>
            <person name="Heinekamp T."/>
            <person name="Helmstaedt K."/>
            <person name="Henrissat B."/>
            <person name="Hofmann G."/>
            <person name="Homan T."/>
            <person name="Horio T."/>
            <person name="Horiuchi H."/>
            <person name="James S."/>
            <person name="Jones M."/>
            <person name="Karaffa L."/>
            <person name="Karanyi Z."/>
            <person name="Kato M."/>
            <person name="Keller N."/>
            <person name="Kelly D.E."/>
            <person name="Kiel J.A."/>
            <person name="Kim J.M."/>
            <person name="van der Klei I.J."/>
            <person name="Klis F.M."/>
            <person name="Kovalchuk A."/>
            <person name="Krasevec N."/>
            <person name="Kubicek C.P."/>
            <person name="Liu B."/>
            <person name="Maccabe A."/>
            <person name="Meyer V."/>
            <person name="Mirabito P."/>
            <person name="Miskei M."/>
            <person name="Mos M."/>
            <person name="Mullins J."/>
            <person name="Nelson D.R."/>
            <person name="Nielsen J."/>
            <person name="Oakley B.R."/>
            <person name="Osmani S.A."/>
            <person name="Pakula T."/>
            <person name="Paszewski A."/>
            <person name="Paulsen I."/>
            <person name="Pilsyk S."/>
            <person name="Pocsi I."/>
            <person name="Punt P.J."/>
            <person name="Ram A.F."/>
            <person name="Ren Q."/>
            <person name="Robellet X."/>
            <person name="Robson G."/>
            <person name="Seiboth B."/>
            <person name="van Solingen P."/>
            <person name="Specht T."/>
            <person name="Sun J."/>
            <person name="Taheri-Talesh N."/>
            <person name="Takeshita N."/>
            <person name="Ussery D."/>
            <person name="vanKuyk P.A."/>
            <person name="Visser H."/>
            <person name="van de Vondervoort P.J."/>
            <person name="de Vries R.P."/>
            <person name="Walton J."/>
            <person name="Xiang X."/>
            <person name="Xiong Y."/>
            <person name="Zeng A.P."/>
            <person name="Brandt B.W."/>
            <person name="Cornell M.J."/>
            <person name="van den Hondel C.A."/>
            <person name="Visser J."/>
            <person name="Oliver S.G."/>
            <person name="Turner G."/>
        </authorList>
    </citation>
    <scope>GENOME REANNOTATION</scope>
    <source>
        <strain>FGSC A4 / ATCC 38163 / CBS 112.46 / NRRL 194 / M139</strain>
    </source>
</reference>
<reference key="3">
    <citation type="journal article" date="2011" name="Pigment Cell Melanoma Res.">
        <title>2,4,6-Octatrienoic acid is a novel promoter of melanogenesis and antioxidant defence in normal human melanocytes via PPAR-gamma activation.</title>
        <authorList>
            <person name="Flori E."/>
            <person name="Mastrofrancesco A."/>
            <person name="Kovacs D."/>
            <person name="Ramot Y."/>
            <person name="Briganti S."/>
            <person name="Bellei B."/>
            <person name="Paus R."/>
            <person name="Picardo M."/>
        </authorList>
    </citation>
    <scope>BIOTECHNOLOGY</scope>
</reference>
<reference key="4">
    <citation type="journal article" date="2018" name="ACS Chem. Biol.">
        <title>Hybrid transcription factor engineering activates the silent secondary metabolite gene cluster for (+)-asperlin in Aspergillus nidulans.</title>
        <authorList>
            <person name="Grau M.F."/>
            <person name="Entwistle R."/>
            <person name="Chiang Y.M."/>
            <person name="Ahuja M."/>
            <person name="Oakley C.E."/>
            <person name="Akashi T."/>
            <person name="Wang C.C.C."/>
            <person name="Todd R.B."/>
            <person name="Oakley B.R."/>
        </authorList>
    </citation>
    <scope>IDENTIFICATION</scope>
    <scope>DISRUPTION PHENOTYPE</scope>
    <scope>FUNCTION</scope>
    <scope>DOMAIN</scope>
    <scope>INDUCTION</scope>
    <scope>PATHWAY</scope>
</reference>
<protein>
    <recommendedName>
        <fullName evidence="9">Highly reducing polyketide synthase alnA</fullName>
        <ecNumber evidence="10">2.3.1.-</ecNumber>
    </recommendedName>
    <alternativeName>
        <fullName evidence="9">Asperlin biosynthesis cluster protein A</fullName>
    </alternativeName>
</protein>
<feature type="chain" id="PRO_0000445939" description="Highly reducing polyketide synthase alnA">
    <location>
        <begin position="1"/>
        <end position="2458"/>
    </location>
</feature>
<feature type="domain" description="Ketosynthase family 3 (KS3)" evidence="3 10">
    <location>
        <begin position="48"/>
        <end position="473"/>
    </location>
</feature>
<feature type="domain" description="PKS/mFAS DH" evidence="4">
    <location>
        <begin position="1000"/>
        <end position="1307"/>
    </location>
</feature>
<feature type="domain" description="Carrier" evidence="2 10">
    <location>
        <begin position="2359"/>
        <end position="2441"/>
    </location>
</feature>
<feature type="region of interest" description="Disordered" evidence="6">
    <location>
        <begin position="488"/>
        <end position="515"/>
    </location>
</feature>
<feature type="region of interest" description="Malonyl-CoA:ACP transacylase (MAT) domain" evidence="1 10">
    <location>
        <begin position="609"/>
        <end position="932"/>
    </location>
</feature>
<feature type="region of interest" description="N-terminal hotdog fold" evidence="4">
    <location>
        <begin position="1000"/>
        <end position="1130"/>
    </location>
</feature>
<feature type="region of interest" description="Dehydratase (DH) domain" evidence="1 10">
    <location>
        <begin position="1001"/>
        <end position="1305"/>
    </location>
</feature>
<feature type="region of interest" description="C-terminal hotdog fold" evidence="4">
    <location>
        <begin position="1148"/>
        <end position="1307"/>
    </location>
</feature>
<feature type="region of interest" description="Enoylreductase (ER) domain" evidence="1 10">
    <location>
        <begin position="1740"/>
        <end position="2051"/>
    </location>
</feature>
<feature type="region of interest" description="Ketoreductase (KR) domain" evidence="1 10">
    <location>
        <begin position="2076"/>
        <end position="2264"/>
    </location>
</feature>
<feature type="compositionally biased region" description="Low complexity" evidence="6">
    <location>
        <begin position="499"/>
        <end position="515"/>
    </location>
</feature>
<feature type="active site" description="For beta-ketoacyl synthase activity" evidence="3">
    <location>
        <position position="221"/>
    </location>
</feature>
<feature type="active site" description="For beta-ketoacyl synthase activity" evidence="3">
    <location>
        <position position="356"/>
    </location>
</feature>
<feature type="active site" description="For beta-ketoacyl synthase activity" evidence="3">
    <location>
        <position position="396"/>
    </location>
</feature>
<feature type="active site" description="For malonyltransferase activity" evidence="5">
    <location>
        <position position="697"/>
    </location>
</feature>
<feature type="active site" description="Proton acceptor; for dehydratase activity" evidence="4">
    <location>
        <position position="1032"/>
    </location>
</feature>
<feature type="active site" description="Proton donor; for dehydratase activity" evidence="4">
    <location>
        <position position="1218"/>
    </location>
</feature>
<feature type="modified residue" description="O-(pantetheine 4'-phosphoryl)serine" evidence="2">
    <location>
        <position position="2401"/>
    </location>
</feature>
<gene>
    <name evidence="9" type="primary">alnA</name>
    <name type="ORF">ANIA_11191</name>
</gene>
<keyword id="KW-0511">Multifunctional enzyme</keyword>
<keyword id="KW-0560">Oxidoreductase</keyword>
<keyword id="KW-0596">Phosphopantetheine</keyword>
<keyword id="KW-0597">Phosphoprotein</keyword>
<keyword id="KW-1185">Reference proteome</keyword>
<keyword id="KW-0808">Transferase</keyword>
<proteinExistence type="evidence at protein level"/>
<name>ALNA_EMENI</name>
<dbReference type="EC" id="2.3.1.-" evidence="10"/>
<dbReference type="EMBL" id="BN001306">
    <property type="protein sequence ID" value="CBF82304.1"/>
    <property type="molecule type" value="Genomic_DNA"/>
</dbReference>
<dbReference type="RefSeq" id="XP_682486.1">
    <property type="nucleotide sequence ID" value="XM_677394.1"/>
</dbReference>
<dbReference type="SMR" id="C8VJR7"/>
<dbReference type="STRING" id="227321.C8VJR7"/>
<dbReference type="EnsemblFungi" id="CBF82304">
    <property type="protein sequence ID" value="CBF82304"/>
    <property type="gene ID" value="ANIA_11191"/>
</dbReference>
<dbReference type="GeneID" id="2867995"/>
<dbReference type="KEGG" id="ani:ANIA_11191"/>
<dbReference type="VEuPathDB" id="FungiDB:AN11191"/>
<dbReference type="eggNOG" id="KOG1202">
    <property type="taxonomic scope" value="Eukaryota"/>
</dbReference>
<dbReference type="HOGENOM" id="CLU_000022_31_0_1"/>
<dbReference type="InParanoid" id="C8VJR7"/>
<dbReference type="OMA" id="WEGRENE"/>
<dbReference type="OrthoDB" id="329835at2759"/>
<dbReference type="Proteomes" id="UP000000560">
    <property type="component" value="Chromosome VI"/>
</dbReference>
<dbReference type="GO" id="GO:0004315">
    <property type="term" value="F:3-oxoacyl-[acyl-carrier-protein] synthase activity"/>
    <property type="evidence" value="ECO:0007669"/>
    <property type="project" value="InterPro"/>
</dbReference>
<dbReference type="GO" id="GO:0004312">
    <property type="term" value="F:fatty acid synthase activity"/>
    <property type="evidence" value="ECO:0000318"/>
    <property type="project" value="GO_Central"/>
</dbReference>
<dbReference type="GO" id="GO:0016491">
    <property type="term" value="F:oxidoreductase activity"/>
    <property type="evidence" value="ECO:0007669"/>
    <property type="project" value="UniProtKB-KW"/>
</dbReference>
<dbReference type="GO" id="GO:0031177">
    <property type="term" value="F:phosphopantetheine binding"/>
    <property type="evidence" value="ECO:0007669"/>
    <property type="project" value="InterPro"/>
</dbReference>
<dbReference type="GO" id="GO:0006633">
    <property type="term" value="P:fatty acid biosynthetic process"/>
    <property type="evidence" value="ECO:0000318"/>
    <property type="project" value="GO_Central"/>
</dbReference>
<dbReference type="GO" id="GO:0030639">
    <property type="term" value="P:polyketide biosynthetic process"/>
    <property type="evidence" value="ECO:0007669"/>
    <property type="project" value="UniProtKB-ARBA"/>
</dbReference>
<dbReference type="GO" id="GO:0019748">
    <property type="term" value="P:secondary metabolic process"/>
    <property type="evidence" value="ECO:0000303"/>
    <property type="project" value="AspGD"/>
</dbReference>
<dbReference type="GO" id="GO:0044550">
    <property type="term" value="P:secondary metabolite biosynthetic process"/>
    <property type="evidence" value="ECO:0000318"/>
    <property type="project" value="GO_Central"/>
</dbReference>
<dbReference type="CDD" id="cd05195">
    <property type="entry name" value="enoyl_red"/>
    <property type="match status" value="1"/>
</dbReference>
<dbReference type="CDD" id="cd00833">
    <property type="entry name" value="PKS"/>
    <property type="match status" value="1"/>
</dbReference>
<dbReference type="Gene3D" id="3.30.70.3290">
    <property type="match status" value="1"/>
</dbReference>
<dbReference type="Gene3D" id="3.40.47.10">
    <property type="match status" value="1"/>
</dbReference>
<dbReference type="Gene3D" id="1.10.1200.10">
    <property type="entry name" value="ACP-like"/>
    <property type="match status" value="1"/>
</dbReference>
<dbReference type="Gene3D" id="3.40.366.10">
    <property type="entry name" value="Malonyl-Coenzyme A Acyl Carrier Protein, domain 2"/>
    <property type="match status" value="1"/>
</dbReference>
<dbReference type="Gene3D" id="3.90.180.10">
    <property type="entry name" value="Medium-chain alcohol dehydrogenases, catalytic domain"/>
    <property type="match status" value="1"/>
</dbReference>
<dbReference type="Gene3D" id="3.40.50.720">
    <property type="entry name" value="NAD(P)-binding Rossmann-like Domain"/>
    <property type="match status" value="2"/>
</dbReference>
<dbReference type="Gene3D" id="3.10.129.110">
    <property type="entry name" value="Polyketide synthase dehydratase"/>
    <property type="match status" value="1"/>
</dbReference>
<dbReference type="InterPro" id="IPR001227">
    <property type="entry name" value="Ac_transferase_dom_sf"/>
</dbReference>
<dbReference type="InterPro" id="IPR036736">
    <property type="entry name" value="ACP-like_sf"/>
</dbReference>
<dbReference type="InterPro" id="IPR014043">
    <property type="entry name" value="Acyl_transferase_dom"/>
</dbReference>
<dbReference type="InterPro" id="IPR016035">
    <property type="entry name" value="Acyl_Trfase/lysoPLipase"/>
</dbReference>
<dbReference type="InterPro" id="IPR011032">
    <property type="entry name" value="GroES-like_sf"/>
</dbReference>
<dbReference type="InterPro" id="IPR018201">
    <property type="entry name" value="Ketoacyl_synth_AS"/>
</dbReference>
<dbReference type="InterPro" id="IPR014031">
    <property type="entry name" value="Ketoacyl_synth_C"/>
</dbReference>
<dbReference type="InterPro" id="IPR014030">
    <property type="entry name" value="Ketoacyl_synth_N"/>
</dbReference>
<dbReference type="InterPro" id="IPR016036">
    <property type="entry name" value="Malonyl_transacylase_ACP-bd"/>
</dbReference>
<dbReference type="InterPro" id="IPR036291">
    <property type="entry name" value="NAD(P)-bd_dom_sf"/>
</dbReference>
<dbReference type="InterPro" id="IPR056501">
    <property type="entry name" value="NAD-bd_HRPKS_sdrA"/>
</dbReference>
<dbReference type="InterPro" id="IPR032821">
    <property type="entry name" value="PKS_assoc"/>
</dbReference>
<dbReference type="InterPro" id="IPR020841">
    <property type="entry name" value="PKS_Beta-ketoAc_synthase_dom"/>
</dbReference>
<dbReference type="InterPro" id="IPR042104">
    <property type="entry name" value="PKS_dehydratase_sf"/>
</dbReference>
<dbReference type="InterPro" id="IPR020807">
    <property type="entry name" value="PKS_DH"/>
</dbReference>
<dbReference type="InterPro" id="IPR049551">
    <property type="entry name" value="PKS_DH_C"/>
</dbReference>
<dbReference type="InterPro" id="IPR049552">
    <property type="entry name" value="PKS_DH_N"/>
</dbReference>
<dbReference type="InterPro" id="IPR020843">
    <property type="entry name" value="PKS_ER"/>
</dbReference>
<dbReference type="InterPro" id="IPR013968">
    <property type="entry name" value="PKS_KR"/>
</dbReference>
<dbReference type="InterPro" id="IPR049900">
    <property type="entry name" value="PKS_mFAS_DH"/>
</dbReference>
<dbReference type="InterPro" id="IPR050091">
    <property type="entry name" value="PKS_NRPS_Biosynth_Enz"/>
</dbReference>
<dbReference type="InterPro" id="IPR020806">
    <property type="entry name" value="PKS_PP-bd"/>
</dbReference>
<dbReference type="InterPro" id="IPR009081">
    <property type="entry name" value="PP-bd_ACP"/>
</dbReference>
<dbReference type="InterPro" id="IPR006162">
    <property type="entry name" value="Ppantetheine_attach_site"/>
</dbReference>
<dbReference type="InterPro" id="IPR016039">
    <property type="entry name" value="Thiolase-like"/>
</dbReference>
<dbReference type="PANTHER" id="PTHR43775:SF29">
    <property type="entry name" value="ASPERFURANONE POLYKETIDE SYNTHASE AFOG-RELATED"/>
    <property type="match status" value="1"/>
</dbReference>
<dbReference type="PANTHER" id="PTHR43775">
    <property type="entry name" value="FATTY ACID SYNTHASE"/>
    <property type="match status" value="1"/>
</dbReference>
<dbReference type="Pfam" id="PF00698">
    <property type="entry name" value="Acyl_transf_1"/>
    <property type="match status" value="1"/>
</dbReference>
<dbReference type="Pfam" id="PF16197">
    <property type="entry name" value="KAsynt_C_assoc"/>
    <property type="match status" value="1"/>
</dbReference>
<dbReference type="Pfam" id="PF00109">
    <property type="entry name" value="ketoacyl-synt"/>
    <property type="match status" value="1"/>
</dbReference>
<dbReference type="Pfam" id="PF02801">
    <property type="entry name" value="Ketoacyl-synt_C"/>
    <property type="match status" value="1"/>
</dbReference>
<dbReference type="Pfam" id="PF08659">
    <property type="entry name" value="KR"/>
    <property type="match status" value="1"/>
</dbReference>
<dbReference type="Pfam" id="PF23114">
    <property type="entry name" value="NAD-bd_HRPKS_sdrA"/>
    <property type="match status" value="1"/>
</dbReference>
<dbReference type="Pfam" id="PF21089">
    <property type="entry name" value="PKS_DH_N"/>
    <property type="match status" value="1"/>
</dbReference>
<dbReference type="Pfam" id="PF14765">
    <property type="entry name" value="PS-DH"/>
    <property type="match status" value="1"/>
</dbReference>
<dbReference type="SMART" id="SM00827">
    <property type="entry name" value="PKS_AT"/>
    <property type="match status" value="1"/>
</dbReference>
<dbReference type="SMART" id="SM00826">
    <property type="entry name" value="PKS_DH"/>
    <property type="match status" value="1"/>
</dbReference>
<dbReference type="SMART" id="SM00829">
    <property type="entry name" value="PKS_ER"/>
    <property type="match status" value="1"/>
</dbReference>
<dbReference type="SMART" id="SM00822">
    <property type="entry name" value="PKS_KR"/>
    <property type="match status" value="1"/>
</dbReference>
<dbReference type="SMART" id="SM00825">
    <property type="entry name" value="PKS_KS"/>
    <property type="match status" value="1"/>
</dbReference>
<dbReference type="SMART" id="SM00823">
    <property type="entry name" value="PKS_PP"/>
    <property type="match status" value="1"/>
</dbReference>
<dbReference type="SUPFAM" id="SSF47336">
    <property type="entry name" value="ACP-like"/>
    <property type="match status" value="1"/>
</dbReference>
<dbReference type="SUPFAM" id="SSF52151">
    <property type="entry name" value="FabD/lysophospholipase-like"/>
    <property type="match status" value="1"/>
</dbReference>
<dbReference type="SUPFAM" id="SSF50129">
    <property type="entry name" value="GroES-like"/>
    <property type="match status" value="1"/>
</dbReference>
<dbReference type="SUPFAM" id="SSF51735">
    <property type="entry name" value="NAD(P)-binding Rossmann-fold domains"/>
    <property type="match status" value="2"/>
</dbReference>
<dbReference type="SUPFAM" id="SSF55048">
    <property type="entry name" value="Probable ACP-binding domain of malonyl-CoA ACP transacylase"/>
    <property type="match status" value="1"/>
</dbReference>
<dbReference type="SUPFAM" id="SSF53901">
    <property type="entry name" value="Thiolase-like"/>
    <property type="match status" value="1"/>
</dbReference>
<dbReference type="PROSITE" id="PS50075">
    <property type="entry name" value="CARRIER"/>
    <property type="match status" value="1"/>
</dbReference>
<dbReference type="PROSITE" id="PS00606">
    <property type="entry name" value="KS3_1"/>
    <property type="match status" value="1"/>
</dbReference>
<dbReference type="PROSITE" id="PS52004">
    <property type="entry name" value="KS3_2"/>
    <property type="match status" value="1"/>
</dbReference>
<dbReference type="PROSITE" id="PS00012">
    <property type="entry name" value="PHOSPHOPANTETHEINE"/>
    <property type="match status" value="1"/>
</dbReference>
<dbReference type="PROSITE" id="PS52019">
    <property type="entry name" value="PKS_MFAS_DH"/>
    <property type="match status" value="1"/>
</dbReference>
<comment type="function">
    <text evidence="8">Highly reducing polyketide synthase; part of the gene cluster that mediates the biosynthesis of asperlin, a polyketide showing anti-inflammatory, antitumor and antibiotic activities (PubMed:30339758). The first step of the asperlin biosynthesis is the production of the intermediate 2,4,6-octatrienoic acid by the highly redusing polyketide synthase alnA with cleavage of the PKS product by the esterase alnB (PubMed:30339758). 2,4,6-octatrienoic acid is further converted to asperlin via several steps involving the remaining enzymes from the cluster (PubMed:30339758).</text>
</comment>
<comment type="pathway">
    <text evidence="8">Polyketide biosynthesis.</text>
</comment>
<comment type="induction">
    <text evidence="8">Expression is controlled by the asperlin biosynthesis cluster-specific transcription factor alnR.</text>
</comment>
<comment type="domain">
    <text evidence="10">Multidomain protein; including a ketosynthase (KS) that catalyzes repeated decarboxylative condensation to elongate the polyketide backbone; a malonyl-CoA:ACP transacylase (MAT) that selects and transfers the extender unit malonyl-CoA; a dehydratase (DH) domain that reduces hydroxyl groups to enoyl groups; an enoylreductase (ER) domain that reduces enoyl groups to alkyl groups; a ketoreductase (KR) domain that catalyzes beta-ketoreduction steps; and an acyl-carrier protein (ACP) that serves as the tether of the growing and completed polyketide via its phosphopantetheinyl arm.</text>
</comment>
<comment type="disruption phenotype">
    <text evidence="8">Fully eliminates the production of asperlin.</text>
</comment>
<comment type="biotechnology">
    <text evidence="7">2,4,6-octatrienoic acid is a particularly interesting compound because of its potential as a natural tanning agent for human skin. It is a promoter of melanogenesis and antioxidant defense in melanocytes in vitro and in vivo, topically and systemically. Pigmentation is a powerful protectant from UV damage and skin cancer, and octatrienoic acid is an attractive natural photoprotectant.</text>
</comment>
<organism>
    <name type="scientific">Emericella nidulans (strain FGSC A4 / ATCC 38163 / CBS 112.46 / NRRL 194 / M139)</name>
    <name type="common">Aspergillus nidulans</name>
    <dbReference type="NCBI Taxonomy" id="227321"/>
    <lineage>
        <taxon>Eukaryota</taxon>
        <taxon>Fungi</taxon>
        <taxon>Dikarya</taxon>
        <taxon>Ascomycota</taxon>
        <taxon>Pezizomycotina</taxon>
        <taxon>Eurotiomycetes</taxon>
        <taxon>Eurotiomycetidae</taxon>
        <taxon>Eurotiales</taxon>
        <taxon>Aspergillaceae</taxon>
        <taxon>Aspergillus</taxon>
        <taxon>Aspergillus subgen. Nidulantes</taxon>
    </lineage>
</organism>
<evidence type="ECO:0000255" key="1"/>
<evidence type="ECO:0000255" key="2">
    <source>
        <dbReference type="PROSITE-ProRule" id="PRU00258"/>
    </source>
</evidence>
<evidence type="ECO:0000255" key="3">
    <source>
        <dbReference type="PROSITE-ProRule" id="PRU01348"/>
    </source>
</evidence>
<evidence type="ECO:0000255" key="4">
    <source>
        <dbReference type="PROSITE-ProRule" id="PRU01363"/>
    </source>
</evidence>
<evidence type="ECO:0000255" key="5">
    <source>
        <dbReference type="PROSITE-ProRule" id="PRU10022"/>
    </source>
</evidence>
<evidence type="ECO:0000256" key="6">
    <source>
        <dbReference type="SAM" id="MobiDB-lite"/>
    </source>
</evidence>
<evidence type="ECO:0000269" key="7">
    <source>
    </source>
</evidence>
<evidence type="ECO:0000269" key="8">
    <source>
    </source>
</evidence>
<evidence type="ECO:0000303" key="9">
    <source>
    </source>
</evidence>
<evidence type="ECO:0000305" key="10">
    <source>
    </source>
</evidence>
<accession>C8VJR7</accession>